<name>Y1456_ARCFU</name>
<gene>
    <name type="ordered locus">AF_1456</name>
</gene>
<accession>O28816</accession>
<protein>
    <recommendedName>
        <fullName>Uncharacterized protein AF_1456</fullName>
    </recommendedName>
</protein>
<keyword id="KW-0175">Coiled coil</keyword>
<keyword id="KW-1185">Reference proteome</keyword>
<sequence>MMEKMKDVNWQEEIRKIIIERVRREAKKRLLEETRKLRMEMKSSKIAEMIREDRDAR</sequence>
<dbReference type="EMBL" id="AE000782">
    <property type="protein sequence ID" value="AAB89795.1"/>
    <property type="molecule type" value="Genomic_DNA"/>
</dbReference>
<dbReference type="PIR" id="G69431">
    <property type="entry name" value="G69431"/>
</dbReference>
<dbReference type="RefSeq" id="WP_010878953.1">
    <property type="nucleotide sequence ID" value="NC_000917.1"/>
</dbReference>
<dbReference type="PaxDb" id="224325-AF_1456"/>
<dbReference type="EnsemblBacteria" id="AAB89795">
    <property type="protein sequence ID" value="AAB89795"/>
    <property type="gene ID" value="AF_1456"/>
</dbReference>
<dbReference type="GeneID" id="44120139"/>
<dbReference type="KEGG" id="afu:AF_1456"/>
<dbReference type="HOGENOM" id="CLU_175270_0_0_2"/>
<dbReference type="Proteomes" id="UP000002199">
    <property type="component" value="Chromosome"/>
</dbReference>
<proteinExistence type="predicted"/>
<evidence type="ECO:0000255" key="1"/>
<feature type="chain" id="PRO_0000128003" description="Uncharacterized protein AF_1456">
    <location>
        <begin position="1"/>
        <end position="57"/>
    </location>
</feature>
<feature type="coiled-coil region" evidence="1">
    <location>
        <begin position="9"/>
        <end position="45"/>
    </location>
</feature>
<organism>
    <name type="scientific">Archaeoglobus fulgidus (strain ATCC 49558 / DSM 4304 / JCM 9628 / NBRC 100126 / VC-16)</name>
    <dbReference type="NCBI Taxonomy" id="224325"/>
    <lineage>
        <taxon>Archaea</taxon>
        <taxon>Methanobacteriati</taxon>
        <taxon>Methanobacteriota</taxon>
        <taxon>Archaeoglobi</taxon>
        <taxon>Archaeoglobales</taxon>
        <taxon>Archaeoglobaceae</taxon>
        <taxon>Archaeoglobus</taxon>
    </lineage>
</organism>
<reference key="1">
    <citation type="journal article" date="1997" name="Nature">
        <title>The complete genome sequence of the hyperthermophilic, sulphate-reducing archaeon Archaeoglobus fulgidus.</title>
        <authorList>
            <person name="Klenk H.-P."/>
            <person name="Clayton R.A."/>
            <person name="Tomb J.-F."/>
            <person name="White O."/>
            <person name="Nelson K.E."/>
            <person name="Ketchum K.A."/>
            <person name="Dodson R.J."/>
            <person name="Gwinn M.L."/>
            <person name="Hickey E.K."/>
            <person name="Peterson J.D."/>
            <person name="Richardson D.L."/>
            <person name="Kerlavage A.R."/>
            <person name="Graham D.E."/>
            <person name="Kyrpides N.C."/>
            <person name="Fleischmann R.D."/>
            <person name="Quackenbush J."/>
            <person name="Lee N.H."/>
            <person name="Sutton G.G."/>
            <person name="Gill S.R."/>
            <person name="Kirkness E.F."/>
            <person name="Dougherty B.A."/>
            <person name="McKenney K."/>
            <person name="Adams M.D."/>
            <person name="Loftus B.J."/>
            <person name="Peterson S.N."/>
            <person name="Reich C.I."/>
            <person name="McNeil L.K."/>
            <person name="Badger J.H."/>
            <person name="Glodek A."/>
            <person name="Zhou L."/>
            <person name="Overbeek R."/>
            <person name="Gocayne J.D."/>
            <person name="Weidman J.F."/>
            <person name="McDonald L.A."/>
            <person name="Utterback T.R."/>
            <person name="Cotton M.D."/>
            <person name="Spriggs T."/>
            <person name="Artiach P."/>
            <person name="Kaine B.P."/>
            <person name="Sykes S.M."/>
            <person name="Sadow P.W."/>
            <person name="D'Andrea K.P."/>
            <person name="Bowman C."/>
            <person name="Fujii C."/>
            <person name="Garland S.A."/>
            <person name="Mason T.M."/>
            <person name="Olsen G.J."/>
            <person name="Fraser C.M."/>
            <person name="Smith H.O."/>
            <person name="Woese C.R."/>
            <person name="Venter J.C."/>
        </authorList>
    </citation>
    <scope>NUCLEOTIDE SEQUENCE [LARGE SCALE GENOMIC DNA]</scope>
    <source>
        <strain>ATCC 49558 / DSM 4304 / JCM 9628 / NBRC 100126 / VC-16</strain>
    </source>
</reference>